<evidence type="ECO:0000250" key="1">
    <source>
        <dbReference type="UniProtKB" id="P40414"/>
    </source>
</evidence>
<evidence type="ECO:0000250" key="2">
    <source>
        <dbReference type="UniProtKB" id="Q22866"/>
    </source>
</evidence>
<evidence type="ECO:0000255" key="3"/>
<evidence type="ECO:0000255" key="4">
    <source>
        <dbReference type="RuleBase" id="RU004515"/>
    </source>
</evidence>
<evidence type="ECO:0000269" key="5">
    <source>
    </source>
</evidence>
<evidence type="ECO:0000303" key="6">
    <source>
    </source>
</evidence>
<evidence type="ECO:0000305" key="7"/>
<evidence type="ECO:0000312" key="8">
    <source>
        <dbReference type="EMBL" id="ACS14052.1"/>
    </source>
</evidence>
<name>TPM03_PERAM</name>
<reference evidence="8" key="1">
    <citation type="journal article" date="2009" name="Asian Pac. J. Allergy Immunol.">
        <title>Allergenicity of native/recombinant tropomyosin, per a 7, of American cockroach (CR), Periplaneta americana, among CR allergic Thais.</title>
        <authorList>
            <person name="Sookrung N."/>
            <person name="Indrawattana N."/>
            <person name="Tungtrongchitr A."/>
            <person name="Bunnag C."/>
            <person name="Tantilipikorn P."/>
            <person name="Kwangsri S."/>
            <person name="Chaicumpa W."/>
        </authorList>
    </citation>
    <scope>NUCLEOTIDE SEQUENCE [MRNA]</scope>
    <scope>ALLERGEN</scope>
</reference>
<feature type="chain" id="PRO_0000447187" description="Tropomyosin Per a 7.0103">
    <location>
        <begin position="1"/>
        <end position="284"/>
    </location>
</feature>
<feature type="coiled-coil region" evidence="3">
    <location>
        <begin position="1"/>
        <end position="266"/>
    </location>
</feature>
<proteinExistence type="evidence at protein level"/>
<protein>
    <recommendedName>
        <fullName evidence="7">Tropomyosin Per a 7.0103</fullName>
    </recommendedName>
    <alternativeName>
        <fullName evidence="6">Tropomyosin Per a 7</fullName>
    </alternativeName>
    <allergenName evidence="7">Per a 7.0103</allergenName>
</protein>
<dbReference type="EMBL" id="FJ976895">
    <property type="protein sequence ID" value="ACS14052.1"/>
    <property type="molecule type" value="mRNA"/>
</dbReference>
<dbReference type="SMR" id="C5J049"/>
<dbReference type="Allergome" id="542">
    <property type="allergen name" value="Per a 7"/>
</dbReference>
<dbReference type="Allergome" id="7725">
    <property type="allergen name" value="Per a 7.0103"/>
</dbReference>
<dbReference type="GO" id="GO:0042803">
    <property type="term" value="F:protein homodimerization activity"/>
    <property type="evidence" value="ECO:0000250"/>
    <property type="project" value="UniProtKB"/>
</dbReference>
<dbReference type="GO" id="GO:0006937">
    <property type="term" value="P:regulation of muscle contraction"/>
    <property type="evidence" value="ECO:0000250"/>
    <property type="project" value="UniProtKB"/>
</dbReference>
<dbReference type="FunFam" id="1.20.5.170:FF:000005">
    <property type="entry name" value="Tropomyosin alpha-1 chain"/>
    <property type="match status" value="1"/>
</dbReference>
<dbReference type="FunFam" id="1.20.5.170:FF:000001">
    <property type="entry name" value="Tropomyosin alpha-1 chain isoform 1"/>
    <property type="match status" value="1"/>
</dbReference>
<dbReference type="FunFam" id="1.20.5.340:FF:000001">
    <property type="entry name" value="Tropomyosin alpha-1 chain isoform 2"/>
    <property type="match status" value="1"/>
</dbReference>
<dbReference type="Gene3D" id="1.20.5.170">
    <property type="match status" value="2"/>
</dbReference>
<dbReference type="Gene3D" id="1.20.5.340">
    <property type="match status" value="1"/>
</dbReference>
<dbReference type="InterPro" id="IPR000533">
    <property type="entry name" value="Tropomyosin"/>
</dbReference>
<dbReference type="PANTHER" id="PTHR19269">
    <property type="entry name" value="TROPOMYOSIN"/>
    <property type="match status" value="1"/>
</dbReference>
<dbReference type="Pfam" id="PF00261">
    <property type="entry name" value="Tropomyosin"/>
    <property type="match status" value="1"/>
</dbReference>
<dbReference type="PRINTS" id="PR00194">
    <property type="entry name" value="TROPOMYOSIN"/>
</dbReference>
<dbReference type="SUPFAM" id="SSF57997">
    <property type="entry name" value="Tropomyosin"/>
    <property type="match status" value="1"/>
</dbReference>
<dbReference type="PROSITE" id="PS00326">
    <property type="entry name" value="TROPOMYOSIN"/>
    <property type="match status" value="1"/>
</dbReference>
<organism evidence="8">
    <name type="scientific">Periplaneta americana</name>
    <name type="common">American cockroach</name>
    <name type="synonym">Blatta americana</name>
    <dbReference type="NCBI Taxonomy" id="6978"/>
    <lineage>
        <taxon>Eukaryota</taxon>
        <taxon>Metazoa</taxon>
        <taxon>Ecdysozoa</taxon>
        <taxon>Arthropoda</taxon>
        <taxon>Hexapoda</taxon>
        <taxon>Insecta</taxon>
        <taxon>Pterygota</taxon>
        <taxon>Neoptera</taxon>
        <taxon>Polyneoptera</taxon>
        <taxon>Dictyoptera</taxon>
        <taxon>Blattodea</taxon>
        <taxon>Blattoidea</taxon>
        <taxon>Blattidae</taxon>
        <taxon>Blattinae</taxon>
        <taxon>Periplaneta</taxon>
    </lineage>
</organism>
<accession>C5J049</accession>
<sequence>MDAIKKKMQAMKLEKDNAMDRALLCEQQARDANLRAEKAEEEARSLQKKTQQIENDLDQTMEQLMQVNAKLDEKDKALQNAESEVAALNRRIQLLEEDLERSEERLATATAKLAEASQADDESERARKILESKGLADEERMDALENQLKEARFMAEEADKKYDEVARKLAMVEADLERAEERAESGESKIVELEEELRVVGNNLKSLEVSEEKANLREEEYKQQIKTLTTRLKEAEARAEFAERSVQKLQKEVDRLEDELVHEKEKYKFICDDLDMTFTELVGY</sequence>
<comment type="function">
    <text evidence="2">Tropomyosin, in association with the troponin complex, plays a central role in the calcium dependent regulation of muscle contraction.</text>
</comment>
<comment type="subunit">
    <text evidence="1">Homodimer.</text>
</comment>
<comment type="domain">
    <text evidence="7">The molecule is in a coiled coil structure that is formed by 2 polypeptide chains. The sequence exhibits a prominent seven-residues periodicity.</text>
</comment>
<comment type="allergen">
    <text evidence="5">Causes an allergic reaction in human. Native and recombinant protein binds to IgE in 57% and 43%, respectively, of 14 Thai patients allergic to cockroach P.americana.</text>
</comment>
<comment type="similarity">
    <text evidence="4 7">Belongs to the tropomyosin family.</text>
</comment>
<keyword id="KW-0020">Allergen</keyword>
<keyword id="KW-0175">Coiled coil</keyword>
<keyword id="KW-0514">Muscle protein</keyword>
<keyword id="KW-0677">Repeat</keyword>